<reference key="1">
    <citation type="journal article" date="2005" name="Genome Res.">
        <title>Comparative genome sequencing of Drosophila pseudoobscura: chromosomal, gene, and cis-element evolution.</title>
        <authorList>
            <person name="Richards S."/>
            <person name="Liu Y."/>
            <person name="Bettencourt B.R."/>
            <person name="Hradecky P."/>
            <person name="Letovsky S."/>
            <person name="Nielsen R."/>
            <person name="Thornton K."/>
            <person name="Hubisz M.J."/>
            <person name="Chen R."/>
            <person name="Meisel R.P."/>
            <person name="Couronne O."/>
            <person name="Hua S."/>
            <person name="Smith M.A."/>
            <person name="Zhang P."/>
            <person name="Liu J."/>
            <person name="Bussemaker H.J."/>
            <person name="van Batenburg M.F."/>
            <person name="Howells S.L."/>
            <person name="Scherer S.E."/>
            <person name="Sodergren E."/>
            <person name="Matthews B.B."/>
            <person name="Crosby M.A."/>
            <person name="Schroeder A.J."/>
            <person name="Ortiz-Barrientos D."/>
            <person name="Rives C.M."/>
            <person name="Metzker M.L."/>
            <person name="Muzny D.M."/>
            <person name="Scott G."/>
            <person name="Steffen D."/>
            <person name="Wheeler D.A."/>
            <person name="Worley K.C."/>
            <person name="Havlak P."/>
            <person name="Durbin K.J."/>
            <person name="Egan A."/>
            <person name="Gill R."/>
            <person name="Hume J."/>
            <person name="Morgan M.B."/>
            <person name="Miner G."/>
            <person name="Hamilton C."/>
            <person name="Huang Y."/>
            <person name="Waldron L."/>
            <person name="Verduzco D."/>
            <person name="Clerc-Blankenburg K.P."/>
            <person name="Dubchak I."/>
            <person name="Noor M.A.F."/>
            <person name="Anderson W."/>
            <person name="White K.P."/>
            <person name="Clark A.G."/>
            <person name="Schaeffer S.W."/>
            <person name="Gelbart W.M."/>
            <person name="Weinstock G.M."/>
            <person name="Gibbs R.A."/>
        </authorList>
    </citation>
    <scope>NUCLEOTIDE SEQUENCE [LARGE SCALE GENOMIC DNA]</scope>
    <source>
        <strain>MV2-25 / Tucson 14011-0121.94</strain>
    </source>
</reference>
<keyword id="KW-0009">Actin-binding</keyword>
<keyword id="KW-0963">Cytoplasm</keyword>
<keyword id="KW-0206">Cytoskeleton</keyword>
<keyword id="KW-1185">Reference proteome</keyword>
<keyword id="KW-0677">Repeat</keyword>
<evidence type="ECO:0000250" key="1"/>
<evidence type="ECO:0000255" key="2">
    <source>
        <dbReference type="PROSITE-ProRule" id="PRU00599"/>
    </source>
</evidence>
<evidence type="ECO:0000256" key="3">
    <source>
        <dbReference type="SAM" id="MobiDB-lite"/>
    </source>
</evidence>
<evidence type="ECO:0000305" key="4"/>
<feature type="chain" id="PRO_0000308813" description="Twinfilin">
    <location>
        <begin position="1"/>
        <end position="345"/>
    </location>
</feature>
<feature type="domain" description="ADF-H 1" evidence="2">
    <location>
        <begin position="4"/>
        <end position="139"/>
    </location>
</feature>
<feature type="domain" description="ADF-H 2" evidence="2">
    <location>
        <begin position="177"/>
        <end position="312"/>
    </location>
</feature>
<feature type="region of interest" description="Disordered" evidence="3">
    <location>
        <begin position="320"/>
        <end position="345"/>
    </location>
</feature>
<dbReference type="EMBL" id="CM000070">
    <property type="protein sequence ID" value="EAL27831.2"/>
    <property type="molecule type" value="Genomic_DNA"/>
</dbReference>
<dbReference type="RefSeq" id="XP_001358688.2">
    <property type="nucleotide sequence ID" value="XM_001358651.4"/>
</dbReference>
<dbReference type="SMR" id="Q298X4"/>
<dbReference type="FunCoup" id="Q298X4">
    <property type="interactions" value="1043"/>
</dbReference>
<dbReference type="STRING" id="46245.Q298X4"/>
<dbReference type="EnsemblMetazoa" id="FBtr0283648">
    <property type="protein sequence ID" value="FBpp0282086"/>
    <property type="gene ID" value="FBgn0076436"/>
</dbReference>
<dbReference type="GeneID" id="4801632"/>
<dbReference type="KEGG" id="dpo:4801632"/>
<dbReference type="CTD" id="41719"/>
<dbReference type="eggNOG" id="KOG1747">
    <property type="taxonomic scope" value="Eukaryota"/>
</dbReference>
<dbReference type="HOGENOM" id="CLU_031995_0_1_1"/>
<dbReference type="InParanoid" id="Q298X4"/>
<dbReference type="OMA" id="YLFKHTH"/>
<dbReference type="Proteomes" id="UP000001819">
    <property type="component" value="Chromosome 2"/>
</dbReference>
<dbReference type="Bgee" id="FBgn0076436">
    <property type="expression patterns" value="Expressed in male reproductive system and 3 other cell types or tissues"/>
</dbReference>
<dbReference type="GO" id="GO:0005884">
    <property type="term" value="C:actin filament"/>
    <property type="evidence" value="ECO:0007669"/>
    <property type="project" value="TreeGrafter"/>
</dbReference>
<dbReference type="GO" id="GO:0005938">
    <property type="term" value="C:cell cortex"/>
    <property type="evidence" value="ECO:0007669"/>
    <property type="project" value="UniProtKB-SubCell"/>
</dbReference>
<dbReference type="GO" id="GO:0005737">
    <property type="term" value="C:cytoplasm"/>
    <property type="evidence" value="ECO:0000250"/>
    <property type="project" value="UniProtKB"/>
</dbReference>
<dbReference type="GO" id="GO:0030016">
    <property type="term" value="C:myofibril"/>
    <property type="evidence" value="ECO:0007669"/>
    <property type="project" value="TreeGrafter"/>
</dbReference>
<dbReference type="GO" id="GO:0005886">
    <property type="term" value="C:plasma membrane"/>
    <property type="evidence" value="ECO:0000250"/>
    <property type="project" value="UniProtKB"/>
</dbReference>
<dbReference type="GO" id="GO:0003779">
    <property type="term" value="F:actin binding"/>
    <property type="evidence" value="ECO:0000250"/>
    <property type="project" value="UniProtKB"/>
</dbReference>
<dbReference type="GO" id="GO:0051015">
    <property type="term" value="F:actin filament binding"/>
    <property type="evidence" value="ECO:0007669"/>
    <property type="project" value="TreeGrafter"/>
</dbReference>
<dbReference type="GO" id="GO:0003785">
    <property type="term" value="F:actin monomer binding"/>
    <property type="evidence" value="ECO:0007669"/>
    <property type="project" value="TreeGrafter"/>
</dbReference>
<dbReference type="GO" id="GO:0030042">
    <property type="term" value="P:actin filament depolymerization"/>
    <property type="evidence" value="ECO:0007669"/>
    <property type="project" value="TreeGrafter"/>
</dbReference>
<dbReference type="GO" id="GO:0051016">
    <property type="term" value="P:barbed-end actin filament capping"/>
    <property type="evidence" value="ECO:0007669"/>
    <property type="project" value="TreeGrafter"/>
</dbReference>
<dbReference type="GO" id="GO:0010976">
    <property type="term" value="P:positive regulation of neuron projection development"/>
    <property type="evidence" value="ECO:0007669"/>
    <property type="project" value="TreeGrafter"/>
</dbReference>
<dbReference type="GO" id="GO:0030833">
    <property type="term" value="P:regulation of actin filament polymerization"/>
    <property type="evidence" value="ECO:0000250"/>
    <property type="project" value="UniProtKB"/>
</dbReference>
<dbReference type="GO" id="GO:0010591">
    <property type="term" value="P:regulation of lamellipodium assembly"/>
    <property type="evidence" value="ECO:0007669"/>
    <property type="project" value="TreeGrafter"/>
</dbReference>
<dbReference type="CDD" id="cd11284">
    <property type="entry name" value="ADF_Twf-C_like"/>
    <property type="match status" value="1"/>
</dbReference>
<dbReference type="CDD" id="cd11285">
    <property type="entry name" value="ADF_Twf-N_like"/>
    <property type="match status" value="1"/>
</dbReference>
<dbReference type="FunFam" id="3.40.20.10:FF:000042">
    <property type="entry name" value="Actin depolymerizing protein"/>
    <property type="match status" value="1"/>
</dbReference>
<dbReference type="FunFam" id="3.40.20.10:FF:000007">
    <property type="entry name" value="Twinfilin-1 isoform 1"/>
    <property type="match status" value="1"/>
</dbReference>
<dbReference type="Gene3D" id="3.40.20.10">
    <property type="entry name" value="Severin"/>
    <property type="match status" value="2"/>
</dbReference>
<dbReference type="InterPro" id="IPR002108">
    <property type="entry name" value="ADF-H"/>
</dbReference>
<dbReference type="InterPro" id="IPR029006">
    <property type="entry name" value="ADF-H/Gelsolin-like_dom_sf"/>
</dbReference>
<dbReference type="InterPro" id="IPR028458">
    <property type="entry name" value="Twinfilin"/>
</dbReference>
<dbReference type="PANTHER" id="PTHR13759">
    <property type="entry name" value="TWINFILIN"/>
    <property type="match status" value="1"/>
</dbReference>
<dbReference type="PANTHER" id="PTHR13759:SF1">
    <property type="entry name" value="TWINFILIN"/>
    <property type="match status" value="1"/>
</dbReference>
<dbReference type="Pfam" id="PF00241">
    <property type="entry name" value="Cofilin_ADF"/>
    <property type="match status" value="2"/>
</dbReference>
<dbReference type="SMART" id="SM00102">
    <property type="entry name" value="ADF"/>
    <property type="match status" value="2"/>
</dbReference>
<dbReference type="SUPFAM" id="SSF55753">
    <property type="entry name" value="Actin depolymerizing proteins"/>
    <property type="match status" value="2"/>
</dbReference>
<dbReference type="PROSITE" id="PS51263">
    <property type="entry name" value="ADF_H"/>
    <property type="match status" value="2"/>
</dbReference>
<protein>
    <recommendedName>
        <fullName>Twinfilin</fullName>
    </recommendedName>
</protein>
<proteinExistence type="inferred from homology"/>
<organism>
    <name type="scientific">Drosophila pseudoobscura pseudoobscura</name>
    <name type="common">Fruit fly</name>
    <dbReference type="NCBI Taxonomy" id="46245"/>
    <lineage>
        <taxon>Eukaryota</taxon>
        <taxon>Metazoa</taxon>
        <taxon>Ecdysozoa</taxon>
        <taxon>Arthropoda</taxon>
        <taxon>Hexapoda</taxon>
        <taxon>Insecta</taxon>
        <taxon>Pterygota</taxon>
        <taxon>Neoptera</taxon>
        <taxon>Endopterygota</taxon>
        <taxon>Diptera</taxon>
        <taxon>Brachycera</taxon>
        <taxon>Muscomorpha</taxon>
        <taxon>Ephydroidea</taxon>
        <taxon>Drosophilidae</taxon>
        <taxon>Drosophila</taxon>
        <taxon>Sophophora</taxon>
    </lineage>
</organism>
<sequence length="345" mass="39246">MSHQTGIRANEQLAKVLGKAKNGKLRVVKVSIENEQLSCSATADVKKDWERDYDKLLGPLLEETVPCYILYRLDAKIPLGHSWLLISWIPDTASIRQKMVYASTKATLKTEFGSAYITEELHATTLEETTLEGYRKHKRDFAAPAPLTTREEELKELRKTEVHTEISTNTRHQTLGGISCPLTDATVAAVQDLVRGNYDYLQFRIDLEEERIHVSHAAQVELSALPKQVPEDHARYHLFLFRHTHEGDYQESYVFVYSMPGYTCSVRERMMYSSCKAPFLEQLAALGVDVVKKLEIDNGNELTEAYLLDELHPKKILHRPAFAKPKGPPNRGAKRLTRPSNEDQV</sequence>
<gene>
    <name type="primary">twf</name>
    <name type="ORF">GA16421</name>
</gene>
<name>TWF_DROPS</name>
<accession>Q298X4</accession>
<comment type="function">
    <text evidence="1">Actin-binding protein involved in motile and morphological processes. Inhibits actin polymerization, likely by sequestering G-actin (By similarity).</text>
</comment>
<comment type="subunit">
    <text evidence="1">Interacts with G-actin; ADP-actin form.</text>
</comment>
<comment type="subcellular location">
    <subcellularLocation>
        <location evidence="1">Cytoplasm</location>
        <location evidence="1">Cytoskeleton</location>
    </subcellularLocation>
    <subcellularLocation>
        <location evidence="1">Cytoplasm</location>
        <location evidence="1">Cell cortex</location>
    </subcellularLocation>
</comment>
<comment type="similarity">
    <text evidence="4">Belongs to the actin-binding proteins ADF family. Twinfilin subfamily.</text>
</comment>